<gene>
    <name type="primary">tekt4</name>
</gene>
<sequence>MNSQVLVSRPLAPQSVPAVSLPVQSAQVAQNTGPHSSSGLATAGFRTAKYLHEEWQQGNLTTFYQAFSDRDQSEKGRHESKQLVAETEARAQRSQADCTKSLGERLLDIHFWKSELSREIRDVGAETQLLVQQKVRLERALDATDIPFTIATDNLKCRDRRRGSELVRDDVEMQLLKEVDLIRNVQELLKRTLDQAAQQIRQNRDAKEALEMDYSDKAEAYEFDDKCGRYNNQSTDIQFHLNSSKYEDNTSTPESWAQYTHENIYKAERERMASINLRSLIDSILQDISEDLQAQFDAIAVDFEKRCRELEDAKQKLEMHLKKTLEEIGGQEKNIAALKQAINDKSPPLKVAQTRLHERSYRPNVELCRDHVQIRLVSEVGELTDSFDALKLKLEESEQSLRNLEDTRMSLEKDIANKANSIFIDREKCMTHRTRYPHGMKLLGYQ</sequence>
<protein>
    <recommendedName>
        <fullName>Tektin-4</fullName>
    </recommendedName>
</protein>
<comment type="function">
    <text evidence="2 3">Microtubule inner protein (MIP) part of the dynein-decorated doublet microtubules (DMTs) in cilia and flagellar axoneme. Forms filamentous polymers in the walls of ciliary and flagellar microtubules (By similarity). Contributes to normal sperm motility (By similarity).</text>
</comment>
<comment type="subcellular location">
    <subcellularLocation>
        <location evidence="2">Cytoplasm</location>
        <location evidence="2">Cytoskeleton</location>
        <location evidence="2">Cilium axoneme</location>
    </subcellularLocation>
    <subcellularLocation>
        <location evidence="1">Cell projection</location>
        <location evidence="1">Cilium</location>
        <location evidence="1">Flagellum</location>
    </subcellularLocation>
    <text evidence="1">Found in the abaxial (convex) surface of outer dense fibers in sperm flagella.</text>
</comment>
<comment type="similarity">
    <text evidence="5">Belongs to the tektin family.</text>
</comment>
<organism>
    <name type="scientific">Xenopus laevis</name>
    <name type="common">African clawed frog</name>
    <dbReference type="NCBI Taxonomy" id="8355"/>
    <lineage>
        <taxon>Eukaryota</taxon>
        <taxon>Metazoa</taxon>
        <taxon>Chordata</taxon>
        <taxon>Craniata</taxon>
        <taxon>Vertebrata</taxon>
        <taxon>Euteleostomi</taxon>
        <taxon>Amphibia</taxon>
        <taxon>Batrachia</taxon>
        <taxon>Anura</taxon>
        <taxon>Pipoidea</taxon>
        <taxon>Pipidae</taxon>
        <taxon>Xenopodinae</taxon>
        <taxon>Xenopus</taxon>
        <taxon>Xenopus</taxon>
    </lineage>
</organism>
<keyword id="KW-0966">Cell projection</keyword>
<keyword id="KW-0969">Cilium</keyword>
<keyword id="KW-0970">Cilium biogenesis/degradation</keyword>
<keyword id="KW-0175">Coiled coil</keyword>
<keyword id="KW-0963">Cytoplasm</keyword>
<keyword id="KW-0206">Cytoskeleton</keyword>
<keyword id="KW-0282">Flagellum</keyword>
<keyword id="KW-1185">Reference proteome</keyword>
<dbReference type="EMBL" id="BC087484">
    <property type="protein sequence ID" value="AAH87484.1"/>
    <property type="molecule type" value="mRNA"/>
</dbReference>
<dbReference type="RefSeq" id="NP_001088802.1">
    <property type="nucleotide sequence ID" value="NM_001095333.1"/>
</dbReference>
<dbReference type="SMR" id="Q5PPV2"/>
<dbReference type="DNASU" id="496070"/>
<dbReference type="GeneID" id="496070"/>
<dbReference type="KEGG" id="xla:496070"/>
<dbReference type="AGR" id="Xenbase:XB-GENE-5848490"/>
<dbReference type="CTD" id="496070"/>
<dbReference type="Xenbase" id="XB-GENE-5848490">
    <property type="gene designation" value="tekt4.S"/>
</dbReference>
<dbReference type="OrthoDB" id="5788000at2759"/>
<dbReference type="Proteomes" id="UP000186698">
    <property type="component" value="Chromosome 9_10S"/>
</dbReference>
<dbReference type="Bgee" id="496070">
    <property type="expression patterns" value="Expressed in testis and 16 other cell types or tissues"/>
</dbReference>
<dbReference type="GO" id="GO:0005879">
    <property type="term" value="C:axonemal microtubule"/>
    <property type="evidence" value="ECO:0000250"/>
    <property type="project" value="UniProtKB"/>
</dbReference>
<dbReference type="GO" id="GO:0015630">
    <property type="term" value="C:microtubule cytoskeleton"/>
    <property type="evidence" value="ECO:0000318"/>
    <property type="project" value="GO_Central"/>
</dbReference>
<dbReference type="GO" id="GO:0005634">
    <property type="term" value="C:nucleus"/>
    <property type="evidence" value="ECO:0007669"/>
    <property type="project" value="TreeGrafter"/>
</dbReference>
<dbReference type="GO" id="GO:0036126">
    <property type="term" value="C:sperm flagellum"/>
    <property type="evidence" value="ECO:0000318"/>
    <property type="project" value="GO_Central"/>
</dbReference>
<dbReference type="GO" id="GO:0060271">
    <property type="term" value="P:cilium assembly"/>
    <property type="evidence" value="ECO:0000318"/>
    <property type="project" value="GO_Central"/>
</dbReference>
<dbReference type="GO" id="GO:0060294">
    <property type="term" value="P:cilium movement involved in cell motility"/>
    <property type="evidence" value="ECO:0000318"/>
    <property type="project" value="GO_Central"/>
</dbReference>
<dbReference type="InterPro" id="IPR048256">
    <property type="entry name" value="Tektin-like"/>
</dbReference>
<dbReference type="InterPro" id="IPR000435">
    <property type="entry name" value="Tektins"/>
</dbReference>
<dbReference type="PANTHER" id="PTHR19960">
    <property type="entry name" value="TEKTIN"/>
    <property type="match status" value="1"/>
</dbReference>
<dbReference type="PANTHER" id="PTHR19960:SF12">
    <property type="entry name" value="TEKTIN-4"/>
    <property type="match status" value="1"/>
</dbReference>
<dbReference type="Pfam" id="PF03148">
    <property type="entry name" value="Tektin"/>
    <property type="match status" value="1"/>
</dbReference>
<dbReference type="PRINTS" id="PR00511">
    <property type="entry name" value="TEKTIN"/>
</dbReference>
<proteinExistence type="evidence at transcript level"/>
<name>TEKT4_XENLA</name>
<feature type="chain" id="PRO_0000261165" description="Tektin-4">
    <location>
        <begin position="1"/>
        <end position="446"/>
    </location>
</feature>
<feature type="coiled-coil region" evidence="4">
    <location>
        <begin position="182"/>
        <end position="215"/>
    </location>
</feature>
<feature type="coiled-coil region" evidence="4">
    <location>
        <begin position="297"/>
        <end position="346"/>
    </location>
</feature>
<feature type="coiled-coil region" evidence="4">
    <location>
        <begin position="378"/>
        <end position="422"/>
    </location>
</feature>
<accession>Q5PPV2</accession>
<reference key="1">
    <citation type="submission" date="2004-12" db="EMBL/GenBank/DDBJ databases">
        <authorList>
            <consortium name="NIH - Xenopus Gene Collection (XGC) project"/>
        </authorList>
    </citation>
    <scope>NUCLEOTIDE SEQUENCE [LARGE SCALE MRNA]</scope>
    <source>
        <tissue>Testis</tissue>
    </source>
</reference>
<evidence type="ECO:0000250" key="1">
    <source>
        <dbReference type="UniProtKB" id="Q149S1"/>
    </source>
</evidence>
<evidence type="ECO:0000250" key="2">
    <source>
        <dbReference type="UniProtKB" id="Q2TA38"/>
    </source>
</evidence>
<evidence type="ECO:0000250" key="3">
    <source>
        <dbReference type="UniProtKB" id="Q6X6Z7"/>
    </source>
</evidence>
<evidence type="ECO:0000255" key="4"/>
<evidence type="ECO:0000305" key="5"/>